<sequence length="641" mass="69996">MGRRSTSSTKSGKFMNPTDQARKEARKRELKKNKKQRMMVRAAVLKMKDPKQIIRDMEKLDEMEFNPVQQPQLNEKVLKDKRKKLRETFERILRLYEKENPDIYKELRKLEVEYEQKRAQLSQYFDAVKNAQHVEVESIPLPDMPHAPSNILIQDIPLPGAQPPSILKKTSAYGPPTRAVSILPLLGHGVPRLPPGRKPPGPPPGPPPPQVLQMYGRKVGFALDLPPRRRDEDMLYSPELAQRGHDDDMSSTSEDDGYPEDMDQDKHDDSTEDSDTDRSDAESDGDEFGHRDDSERDNTEEKKSGLSVRFADMPGKSRKKKKNMKELTPLQAMMLRMAGQEIPEEGREVEEFSEEEDDDDSEDSEAEKPSQKQHKEDSHADGSSAASSQQQAPPQAVPPSQIQAPPMPGPPPLGPPPAPPLRPPGPPTGLPPGPPPGAPPFLRPPGMPGIRGPLPRLLPPGPPPGRPPGPPPGPPPGLPPGPPPRGPPPRLPPPAPPGIPPPRPGMMRPPLVPPLGPAPPGLFPPAPLPNPGVLSAPPSLIQRPKADDASAATIEKKATATISAKPQITNPKAEVTRFVPTALRVRRENKGATAVPQRRSEEDSAVPVAKAAPRSGPSVPVSVQTKDDVYEAFMKEMEGLL</sequence>
<accession>Q5PQQ2</accession>
<organism>
    <name type="scientific">Rattus norvegicus</name>
    <name type="common">Rat</name>
    <dbReference type="NCBI Taxonomy" id="10116"/>
    <lineage>
        <taxon>Eukaryota</taxon>
        <taxon>Metazoa</taxon>
        <taxon>Chordata</taxon>
        <taxon>Craniata</taxon>
        <taxon>Vertebrata</taxon>
        <taxon>Euteleostomi</taxon>
        <taxon>Mammalia</taxon>
        <taxon>Eutheria</taxon>
        <taxon>Euarchontoglires</taxon>
        <taxon>Glires</taxon>
        <taxon>Rodentia</taxon>
        <taxon>Myomorpha</taxon>
        <taxon>Muroidea</taxon>
        <taxon>Muridae</taxon>
        <taxon>Murinae</taxon>
        <taxon>Rattus</taxon>
    </lineage>
</organism>
<proteinExistence type="evidence at protein level"/>
<reference key="1">
    <citation type="journal article" date="2004" name="Genome Res.">
        <title>The status, quality, and expansion of the NIH full-length cDNA project: the Mammalian Gene Collection (MGC).</title>
        <authorList>
            <consortium name="The MGC Project Team"/>
        </authorList>
    </citation>
    <scope>NUCLEOTIDE SEQUENCE [LARGE SCALE MRNA]</scope>
    <source>
        <tissue>Heart</tissue>
    </source>
</reference>
<reference key="2">
    <citation type="journal article" date="2012" name="Nat. Commun.">
        <title>Quantitative maps of protein phosphorylation sites across 14 different rat organs and tissues.</title>
        <authorList>
            <person name="Lundby A."/>
            <person name="Secher A."/>
            <person name="Lage K."/>
            <person name="Nordsborg N.B."/>
            <person name="Dmytriyev A."/>
            <person name="Lundby C."/>
            <person name="Olsen J.V."/>
        </authorList>
    </citation>
    <scope>PHOSPHORYLATION [LARGE SCALE ANALYSIS] AT SER-237; SER-353; SER-361 AND SER-364</scope>
    <scope>IDENTIFICATION BY MASS SPECTROMETRY [LARGE SCALE ANALYSIS]</scope>
</reference>
<feature type="chain" id="PRO_0000065947" description="WW domain-binding protein 11">
    <location>
        <begin position="1"/>
        <end position="641"/>
    </location>
</feature>
<feature type="region of interest" description="Required for nuclear import" evidence="1">
    <location>
        <begin position="1"/>
        <end position="45"/>
    </location>
</feature>
<feature type="region of interest" description="Disordered" evidence="5">
    <location>
        <begin position="1"/>
        <end position="37"/>
    </location>
</feature>
<feature type="region of interest" description="Disordered" evidence="5">
    <location>
        <begin position="186"/>
        <end position="213"/>
    </location>
</feature>
<feature type="region of interest" description="Interaction with PP1" evidence="1">
    <location>
        <begin position="217"/>
        <end position="221"/>
    </location>
</feature>
<feature type="region of interest" description="Disordered" evidence="5">
    <location>
        <begin position="236"/>
        <end position="549"/>
    </location>
</feature>
<feature type="region of interest" description="Interaction with PP1" evidence="1">
    <location>
        <begin position="306"/>
        <end position="310"/>
    </location>
</feature>
<feature type="region of interest" description="Disordered" evidence="5">
    <location>
        <begin position="588"/>
        <end position="623"/>
    </location>
</feature>
<feature type="coiled-coil region" evidence="4">
    <location>
        <begin position="75"/>
        <end position="133"/>
    </location>
</feature>
<feature type="short sequence motif" description="PGR">
    <location>
        <begin position="455"/>
        <end position="466"/>
    </location>
</feature>
<feature type="compositionally biased region" description="Polar residues" evidence="5">
    <location>
        <begin position="1"/>
        <end position="11"/>
    </location>
</feature>
<feature type="compositionally biased region" description="Basic residues" evidence="5">
    <location>
        <begin position="28"/>
        <end position="37"/>
    </location>
</feature>
<feature type="compositionally biased region" description="Pro residues" evidence="5">
    <location>
        <begin position="192"/>
        <end position="210"/>
    </location>
</feature>
<feature type="compositionally biased region" description="Acidic residues" evidence="5">
    <location>
        <begin position="253"/>
        <end position="263"/>
    </location>
</feature>
<feature type="compositionally biased region" description="Basic and acidic residues" evidence="5">
    <location>
        <begin position="276"/>
        <end position="304"/>
    </location>
</feature>
<feature type="compositionally biased region" description="Acidic residues" evidence="5">
    <location>
        <begin position="351"/>
        <end position="365"/>
    </location>
</feature>
<feature type="compositionally biased region" description="Basic and acidic residues" evidence="5">
    <location>
        <begin position="366"/>
        <end position="380"/>
    </location>
</feature>
<feature type="compositionally biased region" description="Low complexity" evidence="5">
    <location>
        <begin position="381"/>
        <end position="404"/>
    </location>
</feature>
<feature type="compositionally biased region" description="Pro residues" evidence="5">
    <location>
        <begin position="405"/>
        <end position="447"/>
    </location>
</feature>
<feature type="compositionally biased region" description="Pro residues" evidence="5">
    <location>
        <begin position="456"/>
        <end position="504"/>
    </location>
</feature>
<feature type="compositionally biased region" description="Pro residues" evidence="5">
    <location>
        <begin position="510"/>
        <end position="530"/>
    </location>
</feature>
<feature type="modified residue" description="N6-acetyllysine" evidence="3">
    <location>
        <position position="13"/>
    </location>
</feature>
<feature type="modified residue" description="Phosphoserine" evidence="3">
    <location>
        <position position="181"/>
    </location>
</feature>
<feature type="modified residue" description="Omega-N-methylarginine" evidence="3">
    <location>
        <position position="192"/>
    </location>
</feature>
<feature type="modified residue" description="Phosphotyrosine" evidence="2">
    <location>
        <position position="236"/>
    </location>
</feature>
<feature type="modified residue" description="Phosphoserine" evidence="6">
    <location>
        <position position="237"/>
    </location>
</feature>
<feature type="modified residue" description="Phosphoserine" evidence="3">
    <location>
        <position position="279"/>
    </location>
</feature>
<feature type="modified residue" description="Phosphoserine" evidence="3">
    <location>
        <position position="283"/>
    </location>
</feature>
<feature type="modified residue" description="Phosphoserine" evidence="6">
    <location>
        <position position="353"/>
    </location>
</feature>
<feature type="modified residue" description="Phosphoserine" evidence="6">
    <location>
        <position position="361"/>
    </location>
</feature>
<feature type="modified residue" description="Phosphoserine" evidence="6">
    <location>
        <position position="364"/>
    </location>
</feature>
<feature type="modified residue" description="N6-acetyllysine" evidence="2">
    <location>
        <position position="565"/>
    </location>
</feature>
<feature type="modified residue" description="Phosphoserine" evidence="3">
    <location>
        <position position="600"/>
    </location>
</feature>
<feature type="cross-link" description="Glycyl lysine isopeptide (Lys-Gly) (interchain with G-Cter in SUMO2)" evidence="3">
    <location>
        <position position="557"/>
    </location>
</feature>
<feature type="cross-link" description="Glycyl lysine isopeptide (Lys-Gly) (interchain with G-Cter in SUMO2)" evidence="3">
    <location>
        <position position="572"/>
    </location>
</feature>
<protein>
    <recommendedName>
        <fullName>WW domain-binding protein 11</fullName>
        <shortName>WBP-11</shortName>
    </recommendedName>
    <alternativeName>
        <fullName>Splicing factor that interacts with PQBP-1 and PP1</fullName>
    </alternativeName>
</protein>
<keyword id="KW-0007">Acetylation</keyword>
<keyword id="KW-0175">Coiled coil</keyword>
<keyword id="KW-0963">Cytoplasm</keyword>
<keyword id="KW-1017">Isopeptide bond</keyword>
<keyword id="KW-0488">Methylation</keyword>
<keyword id="KW-0507">mRNA processing</keyword>
<keyword id="KW-0508">mRNA splicing</keyword>
<keyword id="KW-0539">Nucleus</keyword>
<keyword id="KW-0597">Phosphoprotein</keyword>
<keyword id="KW-1185">Reference proteome</keyword>
<keyword id="KW-0698">rRNA processing</keyword>
<keyword id="KW-0832">Ubl conjugation</keyword>
<comment type="function">
    <text evidence="1">Activates pre-mRNA splicing. May inhibit PP1 phosphatase activity (By similarity).</text>
</comment>
<comment type="subunit">
    <text evidence="1">Interacts with PPP1CA, PPP1CB and PPP1CC. Interacts via the PGR motif with PQBP1 in the nucleus. Interacts with the WW domains of WBP4 (By similarity).</text>
</comment>
<comment type="subcellular location">
    <subcellularLocation>
        <location evidence="1">Nucleus</location>
    </subcellularLocation>
    <subcellularLocation>
        <location evidence="1">Cytoplasm</location>
    </subcellularLocation>
    <text evidence="1">Predominantly located in the nucleus with granular heterogeneous distribution. Excluded from nucleoli in interphase cells, distributed throughout cytoplasm in dividing cells. Colocalized with SC35 and U2B in the nucleus. In the cytoplasm, associates with the intermediate filament protein vimentin (By similarity).</text>
</comment>
<evidence type="ECO:0000250" key="1"/>
<evidence type="ECO:0000250" key="2">
    <source>
        <dbReference type="UniProtKB" id="Q923D5"/>
    </source>
</evidence>
<evidence type="ECO:0000250" key="3">
    <source>
        <dbReference type="UniProtKB" id="Q9Y2W2"/>
    </source>
</evidence>
<evidence type="ECO:0000255" key="4"/>
<evidence type="ECO:0000256" key="5">
    <source>
        <dbReference type="SAM" id="MobiDB-lite"/>
    </source>
</evidence>
<evidence type="ECO:0007744" key="6">
    <source>
    </source>
</evidence>
<name>WBP11_RAT</name>
<gene>
    <name type="primary">Wbp11</name>
    <name type="synonym">Sipp1</name>
</gene>
<dbReference type="EMBL" id="BC087082">
    <property type="protein sequence ID" value="AAH87082.1"/>
    <property type="molecule type" value="mRNA"/>
</dbReference>
<dbReference type="RefSeq" id="NP_001009661.1">
    <property type="nucleotide sequence ID" value="NM_001009661.2"/>
</dbReference>
<dbReference type="RefSeq" id="NP_001289946.1">
    <property type="nucleotide sequence ID" value="NM_001303017.1"/>
</dbReference>
<dbReference type="RefSeq" id="XP_008761671.1">
    <property type="nucleotide sequence ID" value="XM_008763449.2"/>
</dbReference>
<dbReference type="RefSeq" id="XP_008761672.1">
    <property type="nucleotide sequence ID" value="XM_008763450.2"/>
</dbReference>
<dbReference type="SMR" id="Q5PQQ2"/>
<dbReference type="FunCoup" id="Q5PQQ2">
    <property type="interactions" value="4129"/>
</dbReference>
<dbReference type="STRING" id="10116.ENSRNOP00000007402"/>
<dbReference type="iPTMnet" id="Q5PQQ2"/>
<dbReference type="PhosphoSitePlus" id="Q5PQQ2"/>
<dbReference type="jPOST" id="Q5PQQ2"/>
<dbReference type="PaxDb" id="10116-ENSRNOP00000007402"/>
<dbReference type="Ensembl" id="ENSRNOT00000007402.6">
    <property type="protein sequence ID" value="ENSRNOP00000007402.5"/>
    <property type="gene ID" value="ENSRNOG00000005505.7"/>
</dbReference>
<dbReference type="GeneID" id="297695"/>
<dbReference type="KEGG" id="rno:297695"/>
<dbReference type="UCSC" id="RGD:1307911">
    <property type="organism name" value="rat"/>
</dbReference>
<dbReference type="AGR" id="RGD:1307911"/>
<dbReference type="CTD" id="51729"/>
<dbReference type="RGD" id="1307911">
    <property type="gene designation" value="Wbp11"/>
</dbReference>
<dbReference type="eggNOG" id="KOG4672">
    <property type="taxonomic scope" value="Eukaryota"/>
</dbReference>
<dbReference type="GeneTree" id="ENSGT01120000272561"/>
<dbReference type="HOGENOM" id="CLU_028337_1_0_1"/>
<dbReference type="InParanoid" id="Q5PQQ2"/>
<dbReference type="OMA" id="FGMRMPP"/>
<dbReference type="OrthoDB" id="10067323at2759"/>
<dbReference type="PhylomeDB" id="Q5PQQ2"/>
<dbReference type="TreeFam" id="TF323226"/>
<dbReference type="Reactome" id="R-RNO-72163">
    <property type="pathway name" value="mRNA Splicing - Major Pathway"/>
</dbReference>
<dbReference type="PRO" id="PR:Q5PQQ2"/>
<dbReference type="Proteomes" id="UP000002494">
    <property type="component" value="Chromosome 4"/>
</dbReference>
<dbReference type="Bgee" id="ENSRNOG00000005505">
    <property type="expression patterns" value="Expressed in testis and 19 other cell types or tissues"/>
</dbReference>
<dbReference type="ExpressionAtlas" id="Q5PQQ2">
    <property type="expression patterns" value="baseline"/>
</dbReference>
<dbReference type="GO" id="GO:0005737">
    <property type="term" value="C:cytoplasm"/>
    <property type="evidence" value="ECO:0000266"/>
    <property type="project" value="RGD"/>
</dbReference>
<dbReference type="GO" id="GO:0016607">
    <property type="term" value="C:nuclear speck"/>
    <property type="evidence" value="ECO:0000266"/>
    <property type="project" value="RGD"/>
</dbReference>
<dbReference type="GO" id="GO:0005634">
    <property type="term" value="C:nucleus"/>
    <property type="evidence" value="ECO:0000266"/>
    <property type="project" value="RGD"/>
</dbReference>
<dbReference type="GO" id="GO:0019888">
    <property type="term" value="F:protein phosphatase regulator activity"/>
    <property type="evidence" value="ECO:0000266"/>
    <property type="project" value="RGD"/>
</dbReference>
<dbReference type="GO" id="GO:0050699">
    <property type="term" value="F:WW domain binding"/>
    <property type="evidence" value="ECO:0000266"/>
    <property type="project" value="RGD"/>
</dbReference>
<dbReference type="GO" id="GO:0006397">
    <property type="term" value="P:mRNA processing"/>
    <property type="evidence" value="ECO:0007669"/>
    <property type="project" value="UniProtKB-KW"/>
</dbReference>
<dbReference type="GO" id="GO:0008380">
    <property type="term" value="P:RNA splicing"/>
    <property type="evidence" value="ECO:0000266"/>
    <property type="project" value="RGD"/>
</dbReference>
<dbReference type="GO" id="GO:0006364">
    <property type="term" value="P:rRNA processing"/>
    <property type="evidence" value="ECO:0007669"/>
    <property type="project" value="UniProtKB-KW"/>
</dbReference>
<dbReference type="InterPro" id="IPR019007">
    <property type="entry name" value="WW_dom-bd_prot_11"/>
</dbReference>
<dbReference type="PANTHER" id="PTHR13361">
    <property type="entry name" value="WW DOMAIN-BINDING PROTEIN 11"/>
    <property type="match status" value="1"/>
</dbReference>
<dbReference type="PANTHER" id="PTHR13361:SF3">
    <property type="entry name" value="WW DOMAIN-BINDING PROTEIN 11"/>
    <property type="match status" value="1"/>
</dbReference>
<dbReference type="Pfam" id="PF09429">
    <property type="entry name" value="Wbp11"/>
    <property type="match status" value="1"/>
</dbReference>